<name>ANMK_MANSM</name>
<evidence type="ECO:0000255" key="1">
    <source>
        <dbReference type="HAMAP-Rule" id="MF_01270"/>
    </source>
</evidence>
<comment type="function">
    <text evidence="1">Catalyzes the specific phosphorylation of 1,6-anhydro-N-acetylmuramic acid (anhMurNAc) with the simultaneous cleavage of the 1,6-anhydro ring, generating MurNAc-6-P. Is required for the utilization of anhMurNAc either imported from the medium or derived from its own cell wall murein, and thus plays a role in cell wall recycling.</text>
</comment>
<comment type="catalytic activity">
    <reaction evidence="1">
        <text>1,6-anhydro-N-acetyl-beta-muramate + ATP + H2O = N-acetyl-D-muramate 6-phosphate + ADP + H(+)</text>
        <dbReference type="Rhea" id="RHEA:24952"/>
        <dbReference type="ChEBI" id="CHEBI:15377"/>
        <dbReference type="ChEBI" id="CHEBI:15378"/>
        <dbReference type="ChEBI" id="CHEBI:30616"/>
        <dbReference type="ChEBI" id="CHEBI:58690"/>
        <dbReference type="ChEBI" id="CHEBI:58722"/>
        <dbReference type="ChEBI" id="CHEBI:456216"/>
        <dbReference type="EC" id="2.7.1.170"/>
    </reaction>
</comment>
<comment type="pathway">
    <text evidence="1">Amino-sugar metabolism; 1,6-anhydro-N-acetylmuramate degradation.</text>
</comment>
<comment type="pathway">
    <text evidence="1">Cell wall biogenesis; peptidoglycan recycling.</text>
</comment>
<comment type="similarity">
    <text evidence="1">Belongs to the anhydro-N-acetylmuramic acid kinase family.</text>
</comment>
<organism>
    <name type="scientific">Mannheimia succiniciproducens (strain KCTC 0769BP / MBEL55E)</name>
    <dbReference type="NCBI Taxonomy" id="221988"/>
    <lineage>
        <taxon>Bacteria</taxon>
        <taxon>Pseudomonadati</taxon>
        <taxon>Pseudomonadota</taxon>
        <taxon>Gammaproteobacteria</taxon>
        <taxon>Pasteurellales</taxon>
        <taxon>Pasteurellaceae</taxon>
        <taxon>Basfia</taxon>
    </lineage>
</organism>
<sequence length="375" mass="41405">MMKQYYIGVMSGTSLDGVDLALMDFTLNPPKLMATDFTPMPEKIREKLTALLRSGETSLRNLGEIDHQLGLLYAESINRFLQKVRLKSEDICAVGCHGQTVWHSPNCEFPFTMQIGDMNLVAAKTGITTVGDFRRKDMALGGQGAPLVPAFHQDLFFAAERLTVVLNIGGISNISVLEENCPTVGYDVSVGNALLDSWIELHQGKRYDKDALWAKNGKISTALLTDLLAEPFFQQAPPKSTGRELFNLAWLNKKLEKFTALSQPMPSPQDVQRTLVEFTALSIANELKKLQKSDRTNLLLVCGGGARNPLIMQRLTALLAEWQVSTTSEFGLDIDYVEAAAFAWLAYRRIHNLPSNLPSVTGAKSEVSLGVIFPK</sequence>
<keyword id="KW-0067">ATP-binding</keyword>
<keyword id="KW-0119">Carbohydrate metabolism</keyword>
<keyword id="KW-0418">Kinase</keyword>
<keyword id="KW-0547">Nucleotide-binding</keyword>
<keyword id="KW-0808">Transferase</keyword>
<reference key="1">
    <citation type="journal article" date="2004" name="Nat. Biotechnol.">
        <title>The genome sequence of the capnophilic rumen bacterium Mannheimia succiniciproducens.</title>
        <authorList>
            <person name="Hong S.H."/>
            <person name="Kim J.S."/>
            <person name="Lee S.Y."/>
            <person name="In Y.H."/>
            <person name="Choi S.S."/>
            <person name="Rih J.-K."/>
            <person name="Kim C.H."/>
            <person name="Jeong H."/>
            <person name="Hur C.G."/>
            <person name="Kim J.J."/>
        </authorList>
    </citation>
    <scope>NUCLEOTIDE SEQUENCE [LARGE SCALE GENOMIC DNA]</scope>
    <source>
        <strain>KCTC 0769BP / MBEL55E</strain>
    </source>
</reference>
<gene>
    <name evidence="1" type="primary">anmK</name>
    <name type="ordered locus">MS1946</name>
</gene>
<accession>Q65R57</accession>
<dbReference type="EC" id="2.7.1.170" evidence="1"/>
<dbReference type="EMBL" id="AE016827">
    <property type="protein sequence ID" value="AAU38553.1"/>
    <property type="molecule type" value="Genomic_DNA"/>
</dbReference>
<dbReference type="RefSeq" id="WP_011201105.1">
    <property type="nucleotide sequence ID" value="NC_006300.1"/>
</dbReference>
<dbReference type="SMR" id="Q65R57"/>
<dbReference type="STRING" id="221988.MS1946"/>
<dbReference type="KEGG" id="msu:MS1946"/>
<dbReference type="eggNOG" id="COG2377">
    <property type="taxonomic scope" value="Bacteria"/>
</dbReference>
<dbReference type="HOGENOM" id="CLU_038782_0_0_6"/>
<dbReference type="OrthoDB" id="9763949at2"/>
<dbReference type="UniPathway" id="UPA00343"/>
<dbReference type="UniPathway" id="UPA00544"/>
<dbReference type="Proteomes" id="UP000000607">
    <property type="component" value="Chromosome"/>
</dbReference>
<dbReference type="GO" id="GO:0005524">
    <property type="term" value="F:ATP binding"/>
    <property type="evidence" value="ECO:0007669"/>
    <property type="project" value="UniProtKB-UniRule"/>
</dbReference>
<dbReference type="GO" id="GO:0016301">
    <property type="term" value="F:kinase activity"/>
    <property type="evidence" value="ECO:0007669"/>
    <property type="project" value="UniProtKB-KW"/>
</dbReference>
<dbReference type="GO" id="GO:0016773">
    <property type="term" value="F:phosphotransferase activity, alcohol group as acceptor"/>
    <property type="evidence" value="ECO:0007669"/>
    <property type="project" value="UniProtKB-UniRule"/>
</dbReference>
<dbReference type="GO" id="GO:0097175">
    <property type="term" value="P:1,6-anhydro-N-acetyl-beta-muramic acid catabolic process"/>
    <property type="evidence" value="ECO:0007669"/>
    <property type="project" value="UniProtKB-UniRule"/>
</dbReference>
<dbReference type="GO" id="GO:0006040">
    <property type="term" value="P:amino sugar metabolic process"/>
    <property type="evidence" value="ECO:0007669"/>
    <property type="project" value="InterPro"/>
</dbReference>
<dbReference type="GO" id="GO:0009254">
    <property type="term" value="P:peptidoglycan turnover"/>
    <property type="evidence" value="ECO:0007669"/>
    <property type="project" value="UniProtKB-UniRule"/>
</dbReference>
<dbReference type="CDD" id="cd24050">
    <property type="entry name" value="ASKHA_NBD_ANMK"/>
    <property type="match status" value="1"/>
</dbReference>
<dbReference type="Gene3D" id="3.30.420.40">
    <property type="match status" value="2"/>
</dbReference>
<dbReference type="HAMAP" id="MF_01270">
    <property type="entry name" value="AnhMurNAc_kinase"/>
    <property type="match status" value="1"/>
</dbReference>
<dbReference type="InterPro" id="IPR005338">
    <property type="entry name" value="Anhydro_N_Ac-Mur_kinase"/>
</dbReference>
<dbReference type="InterPro" id="IPR043129">
    <property type="entry name" value="ATPase_NBD"/>
</dbReference>
<dbReference type="NCBIfam" id="NF007139">
    <property type="entry name" value="PRK09585.1-3"/>
    <property type="match status" value="1"/>
</dbReference>
<dbReference type="PANTHER" id="PTHR30605">
    <property type="entry name" value="ANHYDRO-N-ACETYLMURAMIC ACID KINASE"/>
    <property type="match status" value="1"/>
</dbReference>
<dbReference type="PANTHER" id="PTHR30605:SF0">
    <property type="entry name" value="ANHYDRO-N-ACETYLMURAMIC ACID KINASE"/>
    <property type="match status" value="1"/>
</dbReference>
<dbReference type="Pfam" id="PF03702">
    <property type="entry name" value="AnmK"/>
    <property type="match status" value="1"/>
</dbReference>
<dbReference type="SUPFAM" id="SSF53067">
    <property type="entry name" value="Actin-like ATPase domain"/>
    <property type="match status" value="1"/>
</dbReference>
<feature type="chain" id="PRO_0000250012" description="Anhydro-N-acetylmuramic acid kinase">
    <location>
        <begin position="1"/>
        <end position="375"/>
    </location>
</feature>
<feature type="binding site" evidence="1">
    <location>
        <begin position="12"/>
        <end position="19"/>
    </location>
    <ligand>
        <name>ATP</name>
        <dbReference type="ChEBI" id="CHEBI:30616"/>
    </ligand>
</feature>
<proteinExistence type="inferred from homology"/>
<protein>
    <recommendedName>
        <fullName evidence="1">Anhydro-N-acetylmuramic acid kinase</fullName>
        <ecNumber evidence="1">2.7.1.170</ecNumber>
    </recommendedName>
    <alternativeName>
        <fullName evidence="1">AnhMurNAc kinase</fullName>
    </alternativeName>
</protein>